<geneLocation type="plasmid">
    <name>megaplasmid Rsp</name>
</geneLocation>
<comment type="function">
    <text evidence="1">Specifically catalyzes the NAD or NADP-dependent dehydrogenation of L-aspartate to iminoaspartate.</text>
</comment>
<comment type="catalytic activity">
    <reaction evidence="1">
        <text>L-aspartate + NADP(+) + H2O = oxaloacetate + NH4(+) + NADPH + H(+)</text>
        <dbReference type="Rhea" id="RHEA:11784"/>
        <dbReference type="ChEBI" id="CHEBI:15377"/>
        <dbReference type="ChEBI" id="CHEBI:15378"/>
        <dbReference type="ChEBI" id="CHEBI:16452"/>
        <dbReference type="ChEBI" id="CHEBI:28938"/>
        <dbReference type="ChEBI" id="CHEBI:29991"/>
        <dbReference type="ChEBI" id="CHEBI:57783"/>
        <dbReference type="ChEBI" id="CHEBI:58349"/>
        <dbReference type="EC" id="1.4.1.21"/>
    </reaction>
</comment>
<comment type="catalytic activity">
    <reaction evidence="1">
        <text>L-aspartate + NAD(+) + H2O = oxaloacetate + NH4(+) + NADH + H(+)</text>
        <dbReference type="Rhea" id="RHEA:11788"/>
        <dbReference type="ChEBI" id="CHEBI:15377"/>
        <dbReference type="ChEBI" id="CHEBI:15378"/>
        <dbReference type="ChEBI" id="CHEBI:16452"/>
        <dbReference type="ChEBI" id="CHEBI:28938"/>
        <dbReference type="ChEBI" id="CHEBI:29991"/>
        <dbReference type="ChEBI" id="CHEBI:57540"/>
        <dbReference type="ChEBI" id="CHEBI:57945"/>
        <dbReference type="EC" id="1.4.1.21"/>
    </reaction>
</comment>
<comment type="pathway">
    <text evidence="1">Cofactor biosynthesis; NAD(+) biosynthesis; iminoaspartate from L-aspartate (dehydrogenase route): step 1/1.</text>
</comment>
<comment type="miscellaneous">
    <text evidence="1">The iminoaspartate product is unstable in aqueous solution and can decompose to oxaloacetate and ammonia.</text>
</comment>
<comment type="similarity">
    <text evidence="1">Belongs to the L-aspartate dehydrogenase family.</text>
</comment>
<name>ASPD_RALN1</name>
<organism>
    <name type="scientific">Ralstonia nicotianae (strain ATCC BAA-1114 / GMI1000)</name>
    <name type="common">Ralstonia solanacearum</name>
    <dbReference type="NCBI Taxonomy" id="267608"/>
    <lineage>
        <taxon>Bacteria</taxon>
        <taxon>Pseudomonadati</taxon>
        <taxon>Pseudomonadota</taxon>
        <taxon>Betaproteobacteria</taxon>
        <taxon>Burkholderiales</taxon>
        <taxon>Burkholderiaceae</taxon>
        <taxon>Ralstonia</taxon>
        <taxon>Ralstonia solanacearum species complex</taxon>
    </lineage>
</organism>
<sequence length="268" mass="28259">MLHVSMVGCGAIGQGVLELLKSDPDLCFDTVIVPEHGMDRARAAIAPFAPRTRVMTRLPAQADRPDLLVECAGHDALREHVVPALEQGIDCLVVSVGALSEPGLAERLEAAARRGHAQMQLLSGAIGAIDALAAARVGGLDAVVYTGRKPPRAWKGTPAERQFDLDALDRTTVIFEGKASDAALLFPKNANVAATLALAGLGMERTHVRLLADPTIDENIHHVEARGAFGGFELIMRGKPLAANPKTSALTVFSVVRALGNRAHAVSI</sequence>
<feature type="chain" id="PRO_0000144891" description="L-aspartate dehydrogenase">
    <location>
        <begin position="1"/>
        <end position="268"/>
    </location>
</feature>
<feature type="active site" evidence="1">
    <location>
        <position position="221"/>
    </location>
</feature>
<feature type="binding site" evidence="1">
    <location>
        <position position="125"/>
    </location>
    <ligand>
        <name>NAD(+)</name>
        <dbReference type="ChEBI" id="CHEBI:57540"/>
    </ligand>
</feature>
<feature type="binding site" evidence="1">
    <location>
        <position position="191"/>
    </location>
    <ligand>
        <name>NAD(+)</name>
        <dbReference type="ChEBI" id="CHEBI:57540"/>
    </ligand>
</feature>
<keyword id="KW-0520">NAD</keyword>
<keyword id="KW-0521">NADP</keyword>
<keyword id="KW-0560">Oxidoreductase</keyword>
<keyword id="KW-0614">Plasmid</keyword>
<keyword id="KW-0662">Pyridine nucleotide biosynthesis</keyword>
<keyword id="KW-1185">Reference proteome</keyword>
<protein>
    <recommendedName>
        <fullName evidence="1">L-aspartate dehydrogenase</fullName>
        <ecNumber evidence="1">1.4.1.21</ecNumber>
    </recommendedName>
</protein>
<reference key="1">
    <citation type="journal article" date="2002" name="Nature">
        <title>Genome sequence of the plant pathogen Ralstonia solanacearum.</title>
        <authorList>
            <person name="Salanoubat M."/>
            <person name="Genin S."/>
            <person name="Artiguenave F."/>
            <person name="Gouzy J."/>
            <person name="Mangenot S."/>
            <person name="Arlat M."/>
            <person name="Billault A."/>
            <person name="Brottier P."/>
            <person name="Camus J.-C."/>
            <person name="Cattolico L."/>
            <person name="Chandler M."/>
            <person name="Choisne N."/>
            <person name="Claudel-Renard C."/>
            <person name="Cunnac S."/>
            <person name="Demange N."/>
            <person name="Gaspin C."/>
            <person name="Lavie M."/>
            <person name="Moisan A."/>
            <person name="Robert C."/>
            <person name="Saurin W."/>
            <person name="Schiex T."/>
            <person name="Siguier P."/>
            <person name="Thebault P."/>
            <person name="Whalen M."/>
            <person name="Wincker P."/>
            <person name="Levy M."/>
            <person name="Weissenbach J."/>
            <person name="Boucher C.A."/>
        </authorList>
    </citation>
    <scope>NUCLEOTIDE SEQUENCE [LARGE SCALE GENOMIC DNA]</scope>
    <source>
        <strain>ATCC BAA-1114 / GMI1000</strain>
    </source>
</reference>
<proteinExistence type="inferred from homology"/>
<accession>Q8XRV9</accession>
<dbReference type="EC" id="1.4.1.21" evidence="1"/>
<dbReference type="EMBL" id="AL646053">
    <property type="protein sequence ID" value="CAD17873.1"/>
    <property type="molecule type" value="Genomic_DNA"/>
</dbReference>
<dbReference type="RefSeq" id="WP_011004020.1">
    <property type="nucleotide sequence ID" value="NC_003296.1"/>
</dbReference>
<dbReference type="SMR" id="Q8XRV9"/>
<dbReference type="STRING" id="267608.RSp0722"/>
<dbReference type="EnsemblBacteria" id="CAD17873">
    <property type="protein sequence ID" value="CAD17873"/>
    <property type="gene ID" value="RSp0722"/>
</dbReference>
<dbReference type="KEGG" id="rso:RSp0722"/>
<dbReference type="eggNOG" id="COG1712">
    <property type="taxonomic scope" value="Bacteria"/>
</dbReference>
<dbReference type="HOGENOM" id="CLU_089550_0_0_4"/>
<dbReference type="UniPathway" id="UPA00253">
    <property type="reaction ID" value="UER00456"/>
</dbReference>
<dbReference type="Proteomes" id="UP000001436">
    <property type="component" value="Plasmid megaplasmid Rsp"/>
</dbReference>
<dbReference type="GO" id="GO:0033735">
    <property type="term" value="F:aspartate dehydrogenase activity"/>
    <property type="evidence" value="ECO:0007669"/>
    <property type="project" value="UniProtKB-EC"/>
</dbReference>
<dbReference type="GO" id="GO:0051287">
    <property type="term" value="F:NAD binding"/>
    <property type="evidence" value="ECO:0007669"/>
    <property type="project" value="UniProtKB-UniRule"/>
</dbReference>
<dbReference type="GO" id="GO:0050661">
    <property type="term" value="F:NADP binding"/>
    <property type="evidence" value="ECO:0007669"/>
    <property type="project" value="UniProtKB-UniRule"/>
</dbReference>
<dbReference type="GO" id="GO:0016639">
    <property type="term" value="F:oxidoreductase activity, acting on the CH-NH2 group of donors, NAD or NADP as acceptor"/>
    <property type="evidence" value="ECO:0007669"/>
    <property type="project" value="UniProtKB-UniRule"/>
</dbReference>
<dbReference type="GO" id="GO:0009435">
    <property type="term" value="P:NAD biosynthetic process"/>
    <property type="evidence" value="ECO:0007669"/>
    <property type="project" value="UniProtKB-UniRule"/>
</dbReference>
<dbReference type="Gene3D" id="3.30.360.10">
    <property type="entry name" value="Dihydrodipicolinate Reductase, domain 2"/>
    <property type="match status" value="1"/>
</dbReference>
<dbReference type="Gene3D" id="3.40.50.720">
    <property type="entry name" value="NAD(P)-binding Rossmann-like Domain"/>
    <property type="match status" value="1"/>
</dbReference>
<dbReference type="HAMAP" id="MF_01265">
    <property type="entry name" value="NadX"/>
    <property type="match status" value="1"/>
</dbReference>
<dbReference type="InterPro" id="IPR005106">
    <property type="entry name" value="Asp/hSer_DH_NAD-bd"/>
</dbReference>
<dbReference type="InterPro" id="IPR002811">
    <property type="entry name" value="Asp_DH"/>
</dbReference>
<dbReference type="InterPro" id="IPR020626">
    <property type="entry name" value="Asp_DH_prok"/>
</dbReference>
<dbReference type="InterPro" id="IPR011182">
    <property type="entry name" value="L-Asp_DH"/>
</dbReference>
<dbReference type="InterPro" id="IPR036291">
    <property type="entry name" value="NAD(P)-bd_dom_sf"/>
</dbReference>
<dbReference type="NCBIfam" id="NF009827">
    <property type="entry name" value="PRK13303.1-2"/>
    <property type="match status" value="1"/>
</dbReference>
<dbReference type="NCBIfam" id="NF009828">
    <property type="entry name" value="PRK13303.1-3"/>
    <property type="match status" value="1"/>
</dbReference>
<dbReference type="PANTHER" id="PTHR31873:SF6">
    <property type="entry name" value="ASPARTATE DEHYDROGENASE DOMAIN-CONTAINING PROTEIN"/>
    <property type="match status" value="1"/>
</dbReference>
<dbReference type="PANTHER" id="PTHR31873">
    <property type="entry name" value="L-ASPARTATE DEHYDROGENASE-RELATED"/>
    <property type="match status" value="1"/>
</dbReference>
<dbReference type="Pfam" id="PF01958">
    <property type="entry name" value="Asp_DH_C"/>
    <property type="match status" value="1"/>
</dbReference>
<dbReference type="Pfam" id="PF03447">
    <property type="entry name" value="NAD_binding_3"/>
    <property type="match status" value="1"/>
</dbReference>
<dbReference type="PIRSF" id="PIRSF005227">
    <property type="entry name" value="Asp_dh_NAD_syn"/>
    <property type="match status" value="1"/>
</dbReference>
<dbReference type="SUPFAM" id="SSF55347">
    <property type="entry name" value="Glyceraldehyde-3-phosphate dehydrogenase-like, C-terminal domain"/>
    <property type="match status" value="1"/>
</dbReference>
<dbReference type="SUPFAM" id="SSF51735">
    <property type="entry name" value="NAD(P)-binding Rossmann-fold domains"/>
    <property type="match status" value="1"/>
</dbReference>
<evidence type="ECO:0000255" key="1">
    <source>
        <dbReference type="HAMAP-Rule" id="MF_01265"/>
    </source>
</evidence>
<gene>
    <name evidence="1" type="primary">nadX</name>
    <name type="ordered locus">RSp0722</name>
    <name type="ORF">RS01727</name>
</gene>